<evidence type="ECO:0000250" key="1">
    <source>
        <dbReference type="UniProtKB" id="P00785"/>
    </source>
</evidence>
<evidence type="ECO:0000250" key="2">
    <source>
        <dbReference type="UniProtKB" id="P43297"/>
    </source>
</evidence>
<evidence type="ECO:0000250" key="3">
    <source>
        <dbReference type="UniProtKB" id="P80884"/>
    </source>
</evidence>
<evidence type="ECO:0000250" key="4">
    <source>
        <dbReference type="UniProtKB" id="P84346"/>
    </source>
</evidence>
<evidence type="ECO:0000255" key="5"/>
<evidence type="ECO:0000255" key="6">
    <source>
        <dbReference type="PROSITE-ProRule" id="PRU00498"/>
    </source>
</evidence>
<evidence type="ECO:0000255" key="7">
    <source>
        <dbReference type="PROSITE-ProRule" id="PRU10088"/>
    </source>
</evidence>
<evidence type="ECO:0000255" key="8">
    <source>
        <dbReference type="PROSITE-ProRule" id="PRU10089"/>
    </source>
</evidence>
<evidence type="ECO:0000255" key="9">
    <source>
        <dbReference type="PROSITE-ProRule" id="PRU10090"/>
    </source>
</evidence>
<evidence type="ECO:0000269" key="10">
    <source>
    </source>
</evidence>
<evidence type="ECO:0000269" key="11">
    <source>
    </source>
</evidence>
<evidence type="ECO:0000303" key="12">
    <source>
    </source>
</evidence>
<evidence type="ECO:0000305" key="13"/>
<evidence type="ECO:0000312" key="14">
    <source>
        <dbReference type="Araport" id="AT4G16190"/>
    </source>
</evidence>
<evidence type="ECO:0000312" key="15">
    <source>
        <dbReference type="EMBL" id="CAB10398.1"/>
    </source>
</evidence>
<organism>
    <name type="scientific">Arabidopsis thaliana</name>
    <name type="common">Mouse-ear cress</name>
    <dbReference type="NCBI Taxonomy" id="3702"/>
    <lineage>
        <taxon>Eukaryota</taxon>
        <taxon>Viridiplantae</taxon>
        <taxon>Streptophyta</taxon>
        <taxon>Embryophyta</taxon>
        <taxon>Tracheophyta</taxon>
        <taxon>Spermatophyta</taxon>
        <taxon>Magnoliopsida</taxon>
        <taxon>eudicotyledons</taxon>
        <taxon>Gunneridae</taxon>
        <taxon>Pentapetalae</taxon>
        <taxon>rosids</taxon>
        <taxon>malvids</taxon>
        <taxon>Brassicales</taxon>
        <taxon>Brassicaceae</taxon>
        <taxon>Camelineae</taxon>
        <taxon>Arabidopsis</taxon>
    </lineage>
</organism>
<comment type="function">
    <text evidence="2">Probable thiol protease.</text>
</comment>
<comment type="subcellular location">
    <subcellularLocation>
        <location evidence="11">Lytic vacuole</location>
    </subcellularLocation>
    <text evidence="11">Predominantly vacuolar. From the Golgi apparatus, probably transported to the lytic vacuole (LV) in clathrin-coated vesicles (CCVs) via the prevacuolar compartment (PVC).</text>
</comment>
<comment type="induction">
    <text evidence="10">By drought stress.</text>
</comment>
<comment type="similarity">
    <text evidence="13">Belongs to the peptidase C1 family.</text>
</comment>
<sequence>MDRVVFFFLIAATLLAGSLGSTVISGEVTDGFVNPIRQVVPEENDEQLLNAEHHFTLFKSKYEKTYATQVEHDHRFRVFKANLRRARRNQLLDPSAVHGVTQFSDLTPKEFRRKFLGLKRRGFRLPTDTQTAPILPTSDLPTEFDWREQGAVTPVKNQGMCGSCWSFSAIGALEGAHFLATKELVSLSEQQLVDCDHECDPAQANSCDSGCSGGLMNNAFEYALKAGGLMKEEDYPYTGRDHTACKFDKSKIVASVSNFSVVSSDEDQIAANLVQHGPLAIAINAMWMQTYIGGVSCPYVCSKSQDHGVLLVGFGSSGYAPIRLKEKPYWIIKNSWGAMWGEHGYYKICRGPHNMCGMDTMVSTVAAVHTSPK</sequence>
<keyword id="KW-1015">Disulfide bond</keyword>
<keyword id="KW-0325">Glycoprotein</keyword>
<keyword id="KW-0378">Hydrolase</keyword>
<keyword id="KW-0645">Protease</keyword>
<keyword id="KW-1185">Reference proteome</keyword>
<keyword id="KW-0732">Signal</keyword>
<keyword id="KW-0788">Thiol protease</keyword>
<keyword id="KW-0926">Vacuole</keyword>
<keyword id="KW-0865">Zymogen</keyword>
<accession>Q9SUL1</accession>
<proteinExistence type="evidence at transcript level"/>
<reference key="1">
    <citation type="journal article" date="1998" name="Nature">
        <title>Analysis of 1.9 Mb of contiguous sequence from chromosome 4 of Arabidopsis thaliana.</title>
        <authorList>
            <person name="Bevan M."/>
            <person name="Bancroft I."/>
            <person name="Bent E."/>
            <person name="Love K."/>
            <person name="Goodman H.M."/>
            <person name="Dean C."/>
            <person name="Bergkamp R."/>
            <person name="Dirkse W."/>
            <person name="van Staveren M."/>
            <person name="Stiekema W."/>
            <person name="Drost L."/>
            <person name="Ridley P."/>
            <person name="Hudson S.-A."/>
            <person name="Patel K."/>
            <person name="Murphy G."/>
            <person name="Piffanelli P."/>
            <person name="Wedler H."/>
            <person name="Wedler E."/>
            <person name="Wambutt R."/>
            <person name="Weitzenegger T."/>
            <person name="Pohl T."/>
            <person name="Terryn N."/>
            <person name="Gielen J."/>
            <person name="Villarroel R."/>
            <person name="De Clercq R."/>
            <person name="van Montagu M."/>
            <person name="Lecharny A."/>
            <person name="Aubourg S."/>
            <person name="Gy I."/>
            <person name="Kreis M."/>
            <person name="Lao N."/>
            <person name="Kavanagh T."/>
            <person name="Hempel S."/>
            <person name="Kotter P."/>
            <person name="Entian K.-D."/>
            <person name="Rieger M."/>
            <person name="Schaefer M."/>
            <person name="Funk B."/>
            <person name="Mueller-Auer S."/>
            <person name="Silvey M."/>
            <person name="James R."/>
            <person name="Monfort A."/>
            <person name="Pons A."/>
            <person name="Puigdomenech P."/>
            <person name="Douka A."/>
            <person name="Voukelatou E."/>
            <person name="Milioni D."/>
            <person name="Hatzopoulos P."/>
            <person name="Piravandi E."/>
            <person name="Obermaier B."/>
            <person name="Hilbert H."/>
            <person name="Duesterhoeft A."/>
            <person name="Moores T."/>
            <person name="Jones J.D.G."/>
            <person name="Eneva T."/>
            <person name="Palme K."/>
            <person name="Benes V."/>
            <person name="Rechmann S."/>
            <person name="Ansorge W."/>
            <person name="Cooke R."/>
            <person name="Berger C."/>
            <person name="Delseny M."/>
            <person name="Voet M."/>
            <person name="Volckaert G."/>
            <person name="Mewes H.-W."/>
            <person name="Klosterman S."/>
            <person name="Schueller C."/>
            <person name="Chalwatzis N."/>
        </authorList>
    </citation>
    <scope>NUCLEOTIDE SEQUENCE [LARGE SCALE GENOMIC DNA]</scope>
    <source>
        <strain>cv. Columbia</strain>
    </source>
</reference>
<reference key="2">
    <citation type="journal article" date="1999" name="Nature">
        <title>Sequence and analysis of chromosome 4 of the plant Arabidopsis thaliana.</title>
        <authorList>
            <person name="Mayer K.F.X."/>
            <person name="Schueller C."/>
            <person name="Wambutt R."/>
            <person name="Murphy G."/>
            <person name="Volckaert G."/>
            <person name="Pohl T."/>
            <person name="Duesterhoeft A."/>
            <person name="Stiekema W."/>
            <person name="Entian K.-D."/>
            <person name="Terryn N."/>
            <person name="Harris B."/>
            <person name="Ansorge W."/>
            <person name="Brandt P."/>
            <person name="Grivell L.A."/>
            <person name="Rieger M."/>
            <person name="Weichselgartner M."/>
            <person name="de Simone V."/>
            <person name="Obermaier B."/>
            <person name="Mache R."/>
            <person name="Mueller M."/>
            <person name="Kreis M."/>
            <person name="Delseny M."/>
            <person name="Puigdomenech P."/>
            <person name="Watson M."/>
            <person name="Schmidtheini T."/>
            <person name="Reichert B."/>
            <person name="Portetelle D."/>
            <person name="Perez-Alonso M."/>
            <person name="Boutry M."/>
            <person name="Bancroft I."/>
            <person name="Vos P."/>
            <person name="Hoheisel J."/>
            <person name="Zimmermann W."/>
            <person name="Wedler H."/>
            <person name="Ridley P."/>
            <person name="Langham S.-A."/>
            <person name="McCullagh B."/>
            <person name="Bilham L."/>
            <person name="Robben J."/>
            <person name="van der Schueren J."/>
            <person name="Grymonprez B."/>
            <person name="Chuang Y.-J."/>
            <person name="Vandenbussche F."/>
            <person name="Braeken M."/>
            <person name="Weltjens I."/>
            <person name="Voet M."/>
            <person name="Bastiaens I."/>
            <person name="Aert R."/>
            <person name="Defoor E."/>
            <person name="Weitzenegger T."/>
            <person name="Bothe G."/>
            <person name="Ramsperger U."/>
            <person name="Hilbert H."/>
            <person name="Braun M."/>
            <person name="Holzer E."/>
            <person name="Brandt A."/>
            <person name="Peters S."/>
            <person name="van Staveren M."/>
            <person name="Dirkse W."/>
            <person name="Mooijman P."/>
            <person name="Klein Lankhorst R."/>
            <person name="Rose M."/>
            <person name="Hauf J."/>
            <person name="Koetter P."/>
            <person name="Berneiser S."/>
            <person name="Hempel S."/>
            <person name="Feldpausch M."/>
            <person name="Lamberth S."/>
            <person name="Van den Daele H."/>
            <person name="De Keyser A."/>
            <person name="Buysshaert C."/>
            <person name="Gielen J."/>
            <person name="Villarroel R."/>
            <person name="De Clercq R."/>
            <person name="van Montagu M."/>
            <person name="Rogers J."/>
            <person name="Cronin A."/>
            <person name="Quail M.A."/>
            <person name="Bray-Allen S."/>
            <person name="Clark L."/>
            <person name="Doggett J."/>
            <person name="Hall S."/>
            <person name="Kay M."/>
            <person name="Lennard N."/>
            <person name="McLay K."/>
            <person name="Mayes R."/>
            <person name="Pettett A."/>
            <person name="Rajandream M.A."/>
            <person name="Lyne M."/>
            <person name="Benes V."/>
            <person name="Rechmann S."/>
            <person name="Borkova D."/>
            <person name="Bloecker H."/>
            <person name="Scharfe M."/>
            <person name="Grimm M."/>
            <person name="Loehnert T.-H."/>
            <person name="Dose S."/>
            <person name="de Haan M."/>
            <person name="Maarse A.C."/>
            <person name="Schaefer M."/>
            <person name="Mueller-Auer S."/>
            <person name="Gabel C."/>
            <person name="Fuchs M."/>
            <person name="Fartmann B."/>
            <person name="Granderath K."/>
            <person name="Dauner D."/>
            <person name="Herzl A."/>
            <person name="Neumann S."/>
            <person name="Argiriou A."/>
            <person name="Vitale D."/>
            <person name="Liguori R."/>
            <person name="Piravandi E."/>
            <person name="Massenet O."/>
            <person name="Quigley F."/>
            <person name="Clabauld G."/>
            <person name="Muendlein A."/>
            <person name="Felber R."/>
            <person name="Schnabl S."/>
            <person name="Hiller R."/>
            <person name="Schmidt W."/>
            <person name="Lecharny A."/>
            <person name="Aubourg S."/>
            <person name="Chefdor F."/>
            <person name="Cooke R."/>
            <person name="Berger C."/>
            <person name="Monfort A."/>
            <person name="Casacuberta E."/>
            <person name="Gibbons T."/>
            <person name="Weber N."/>
            <person name="Vandenbol M."/>
            <person name="Bargues M."/>
            <person name="Terol J."/>
            <person name="Torres A."/>
            <person name="Perez-Perez A."/>
            <person name="Purnelle B."/>
            <person name="Bent E."/>
            <person name="Johnson S."/>
            <person name="Tacon D."/>
            <person name="Jesse T."/>
            <person name="Heijnen L."/>
            <person name="Schwarz S."/>
            <person name="Scholler P."/>
            <person name="Heber S."/>
            <person name="Francs P."/>
            <person name="Bielke C."/>
            <person name="Frishman D."/>
            <person name="Haase D."/>
            <person name="Lemcke K."/>
            <person name="Mewes H.-W."/>
            <person name="Stocker S."/>
            <person name="Zaccaria P."/>
            <person name="Bevan M."/>
            <person name="Wilson R.K."/>
            <person name="de la Bastide M."/>
            <person name="Habermann K."/>
            <person name="Parnell L."/>
            <person name="Dedhia N."/>
            <person name="Gnoj L."/>
            <person name="Schutz K."/>
            <person name="Huang E."/>
            <person name="Spiegel L."/>
            <person name="Sekhon M."/>
            <person name="Murray J."/>
            <person name="Sheet P."/>
            <person name="Cordes M."/>
            <person name="Abu-Threideh J."/>
            <person name="Stoneking T."/>
            <person name="Kalicki J."/>
            <person name="Graves T."/>
            <person name="Harmon G."/>
            <person name="Edwards J."/>
            <person name="Latreille P."/>
            <person name="Courtney L."/>
            <person name="Cloud J."/>
            <person name="Abbott A."/>
            <person name="Scott K."/>
            <person name="Johnson D."/>
            <person name="Minx P."/>
            <person name="Bentley D."/>
            <person name="Fulton B."/>
            <person name="Miller N."/>
            <person name="Greco T."/>
            <person name="Kemp K."/>
            <person name="Kramer J."/>
            <person name="Fulton L."/>
            <person name="Mardis E."/>
            <person name="Dante M."/>
            <person name="Pepin K."/>
            <person name="Hillier L.W."/>
            <person name="Nelson J."/>
            <person name="Spieth J."/>
            <person name="Ryan E."/>
            <person name="Andrews S."/>
            <person name="Geisel C."/>
            <person name="Layman D."/>
            <person name="Du H."/>
            <person name="Ali J."/>
            <person name="Berghoff A."/>
            <person name="Jones K."/>
            <person name="Drone K."/>
            <person name="Cotton M."/>
            <person name="Joshu C."/>
            <person name="Antonoiu B."/>
            <person name="Zidanic M."/>
            <person name="Strong C."/>
            <person name="Sun H."/>
            <person name="Lamar B."/>
            <person name="Yordan C."/>
            <person name="Ma P."/>
            <person name="Zhong J."/>
            <person name="Preston R."/>
            <person name="Vil D."/>
            <person name="Shekher M."/>
            <person name="Matero A."/>
            <person name="Shah R."/>
            <person name="Swaby I.K."/>
            <person name="O'Shaughnessy A."/>
            <person name="Rodriguez M."/>
            <person name="Hoffman J."/>
            <person name="Till S."/>
            <person name="Granat S."/>
            <person name="Shohdy N."/>
            <person name="Hasegawa A."/>
            <person name="Hameed A."/>
            <person name="Lodhi M."/>
            <person name="Johnson A."/>
            <person name="Chen E."/>
            <person name="Marra M.A."/>
            <person name="Martienssen R."/>
            <person name="McCombie W.R."/>
        </authorList>
    </citation>
    <scope>NUCLEOTIDE SEQUENCE [LARGE SCALE GENOMIC DNA]</scope>
    <source>
        <strain>cv. Columbia</strain>
    </source>
</reference>
<reference key="3">
    <citation type="journal article" date="2017" name="Plant J.">
        <title>Araport11: a complete reannotation of the Arabidopsis thaliana reference genome.</title>
        <authorList>
            <person name="Cheng C.Y."/>
            <person name="Krishnakumar V."/>
            <person name="Chan A.P."/>
            <person name="Thibaud-Nissen F."/>
            <person name="Schobel S."/>
            <person name="Town C.D."/>
        </authorList>
    </citation>
    <scope>GENOME REANNOTATION</scope>
    <source>
        <strain>cv. Columbia</strain>
    </source>
</reference>
<reference key="4">
    <citation type="journal article" date="2003" name="Science">
        <title>Empirical analysis of transcriptional activity in the Arabidopsis genome.</title>
        <authorList>
            <person name="Yamada K."/>
            <person name="Lim J."/>
            <person name="Dale J.M."/>
            <person name="Chen H."/>
            <person name="Shinn P."/>
            <person name="Palm C.J."/>
            <person name="Southwick A.M."/>
            <person name="Wu H.C."/>
            <person name="Kim C.J."/>
            <person name="Nguyen M."/>
            <person name="Pham P.K."/>
            <person name="Cheuk R.F."/>
            <person name="Karlin-Newmann G."/>
            <person name="Liu S.X."/>
            <person name="Lam B."/>
            <person name="Sakano H."/>
            <person name="Wu T."/>
            <person name="Yu G."/>
            <person name="Miranda M."/>
            <person name="Quach H.L."/>
            <person name="Tripp M."/>
            <person name="Chang C.H."/>
            <person name="Lee J.M."/>
            <person name="Toriumi M.J."/>
            <person name="Chan M.M."/>
            <person name="Tang C.C."/>
            <person name="Onodera C.S."/>
            <person name="Deng J.M."/>
            <person name="Akiyama K."/>
            <person name="Ansari Y."/>
            <person name="Arakawa T."/>
            <person name="Banh J."/>
            <person name="Banno F."/>
            <person name="Bowser L."/>
            <person name="Brooks S.Y."/>
            <person name="Carninci P."/>
            <person name="Chao Q."/>
            <person name="Choy N."/>
            <person name="Enju A."/>
            <person name="Goldsmith A.D."/>
            <person name="Gurjal M."/>
            <person name="Hansen N.F."/>
            <person name="Hayashizaki Y."/>
            <person name="Johnson-Hopson C."/>
            <person name="Hsuan V.W."/>
            <person name="Iida K."/>
            <person name="Karnes M."/>
            <person name="Khan S."/>
            <person name="Koesema E."/>
            <person name="Ishida J."/>
            <person name="Jiang P.X."/>
            <person name="Jones T."/>
            <person name="Kawai J."/>
            <person name="Kamiya A."/>
            <person name="Meyers C."/>
            <person name="Nakajima M."/>
            <person name="Narusaka M."/>
            <person name="Seki M."/>
            <person name="Sakurai T."/>
            <person name="Satou M."/>
            <person name="Tamse R."/>
            <person name="Vaysberg M."/>
            <person name="Wallender E.K."/>
            <person name="Wong C."/>
            <person name="Yamamura Y."/>
            <person name="Yuan S."/>
            <person name="Shinozaki K."/>
            <person name="Davis R.W."/>
            <person name="Theologis A."/>
            <person name="Ecker J.R."/>
        </authorList>
    </citation>
    <scope>NUCLEOTIDE SEQUENCE [LARGE SCALE MRNA]</scope>
    <source>
        <strain>cv. Columbia</strain>
    </source>
</reference>
<reference key="5">
    <citation type="submission" date="2006-07" db="EMBL/GenBank/DDBJ databases">
        <title>Large-scale analysis of RIKEN Arabidopsis full-length (RAFL) cDNAs.</title>
        <authorList>
            <person name="Totoki Y."/>
            <person name="Seki M."/>
            <person name="Ishida J."/>
            <person name="Nakajima M."/>
            <person name="Enju A."/>
            <person name="Kamiya A."/>
            <person name="Narusaka M."/>
            <person name="Shin-i T."/>
            <person name="Nakagawa M."/>
            <person name="Sakamoto N."/>
            <person name="Oishi K."/>
            <person name="Kohara Y."/>
            <person name="Kobayashi M."/>
            <person name="Toyoda A."/>
            <person name="Sakaki Y."/>
            <person name="Sakurai T."/>
            <person name="Iida K."/>
            <person name="Akiyama K."/>
            <person name="Satou M."/>
            <person name="Toyoda T."/>
            <person name="Konagaya A."/>
            <person name="Carninci P."/>
            <person name="Kawai J."/>
            <person name="Hayashizaki Y."/>
            <person name="Shinozaki K."/>
        </authorList>
    </citation>
    <scope>NUCLEOTIDE SEQUENCE [LARGE SCALE MRNA]</scope>
    <source>
        <strain>cv. Columbia</strain>
    </source>
</reference>
<reference key="6">
    <citation type="journal article" date="2002" name="Ann. Bot.">
        <title>Classification of genes differentially expressed during water-deficit stress in Arabidopsis thaliana: an analysis using microarray and differential expression data.</title>
        <authorList>
            <person name="Bray E.A."/>
        </authorList>
    </citation>
    <scope>INDUCTION BY DROUGHT STRESS</scope>
</reference>
<reference key="7">
    <citation type="journal article" date="2008" name="Plant Cell">
        <title>RD19, an Arabidopsis cysteine protease required for RRS1-R-mediated resistance, is relocalized to the nucleus by the Ralstonia solanacearum PopP2 effector.</title>
        <authorList>
            <person name="Bernoux M."/>
            <person name="Timmers T."/>
            <person name="Jauneau A."/>
            <person name="Briere C."/>
            <person name="de Wit P.J."/>
            <person name="Marco Y."/>
            <person name="Deslandes L."/>
        </authorList>
    </citation>
    <scope>SUBCELLULAR LOCATION</scope>
</reference>
<name>RD19C_ARATH</name>
<dbReference type="EC" id="3.4.22.-" evidence="3"/>
<dbReference type="EMBL" id="Z97340">
    <property type="protein sequence ID" value="CAB10398.1"/>
    <property type="molecule type" value="Genomic_DNA"/>
</dbReference>
<dbReference type="EMBL" id="AL161543">
    <property type="protein sequence ID" value="CAB78661.1"/>
    <property type="molecule type" value="Genomic_DNA"/>
</dbReference>
<dbReference type="EMBL" id="CP002687">
    <property type="protein sequence ID" value="AEE83713.1"/>
    <property type="molecule type" value="Genomic_DNA"/>
</dbReference>
<dbReference type="EMBL" id="AY039556">
    <property type="protein sequence ID" value="AAK62611.1"/>
    <property type="molecule type" value="mRNA"/>
</dbReference>
<dbReference type="EMBL" id="AY129473">
    <property type="protein sequence ID" value="AAM91059.1"/>
    <property type="molecule type" value="mRNA"/>
</dbReference>
<dbReference type="EMBL" id="AY136316">
    <property type="protein sequence ID" value="AAM96982.1"/>
    <property type="molecule type" value="mRNA"/>
</dbReference>
<dbReference type="EMBL" id="BT000733">
    <property type="protein sequence ID" value="AAN31875.1"/>
    <property type="molecule type" value="mRNA"/>
</dbReference>
<dbReference type="EMBL" id="AK226366">
    <property type="protein sequence ID" value="BAE98514.1"/>
    <property type="molecule type" value="mRNA"/>
</dbReference>
<dbReference type="PIR" id="D71428">
    <property type="entry name" value="D71428"/>
</dbReference>
<dbReference type="RefSeq" id="NP_567489.1">
    <property type="nucleotide sequence ID" value="NM_117715.3"/>
</dbReference>
<dbReference type="SMR" id="Q9SUL1"/>
<dbReference type="FunCoup" id="Q9SUL1">
    <property type="interactions" value="455"/>
</dbReference>
<dbReference type="STRING" id="3702.Q9SUL1"/>
<dbReference type="MEROPS" id="C01.A06"/>
<dbReference type="GlyCosmos" id="Q9SUL1">
    <property type="glycosylation" value="1 site, No reported glycans"/>
</dbReference>
<dbReference type="GlyGen" id="Q9SUL1">
    <property type="glycosylation" value="1 site"/>
</dbReference>
<dbReference type="PaxDb" id="3702-AT4G16190.1"/>
<dbReference type="ProteomicsDB" id="225945"/>
<dbReference type="EnsemblPlants" id="AT4G16190.1">
    <property type="protein sequence ID" value="AT4G16190.1"/>
    <property type="gene ID" value="AT4G16190"/>
</dbReference>
<dbReference type="GeneID" id="827311"/>
<dbReference type="Gramene" id="AT4G16190.1">
    <property type="protein sequence ID" value="AT4G16190.1"/>
    <property type="gene ID" value="AT4G16190"/>
</dbReference>
<dbReference type="KEGG" id="ath:AT4G16190"/>
<dbReference type="Araport" id="AT4G16190"/>
<dbReference type="TAIR" id="AT4G16190"/>
<dbReference type="eggNOG" id="KOG1542">
    <property type="taxonomic scope" value="Eukaryota"/>
</dbReference>
<dbReference type="HOGENOM" id="CLU_012184_1_3_1"/>
<dbReference type="InParanoid" id="Q9SUL1"/>
<dbReference type="OMA" id="CPYICAK"/>
<dbReference type="PhylomeDB" id="Q9SUL1"/>
<dbReference type="PRO" id="PR:Q9SUL1"/>
<dbReference type="Proteomes" id="UP000006548">
    <property type="component" value="Chromosome 4"/>
</dbReference>
<dbReference type="ExpressionAtlas" id="Q9SUL1">
    <property type="expression patterns" value="baseline and differential"/>
</dbReference>
<dbReference type="GO" id="GO:0000323">
    <property type="term" value="C:lytic vacuole"/>
    <property type="evidence" value="ECO:0000314"/>
    <property type="project" value="UniProtKB"/>
</dbReference>
<dbReference type="GO" id="GO:0000325">
    <property type="term" value="C:plant-type vacuole"/>
    <property type="evidence" value="ECO:0007005"/>
    <property type="project" value="TAIR"/>
</dbReference>
<dbReference type="GO" id="GO:0005773">
    <property type="term" value="C:vacuole"/>
    <property type="evidence" value="ECO:0000314"/>
    <property type="project" value="TAIR"/>
</dbReference>
<dbReference type="GO" id="GO:0008234">
    <property type="term" value="F:cysteine-type peptidase activity"/>
    <property type="evidence" value="ECO:0007669"/>
    <property type="project" value="UniProtKB-KW"/>
</dbReference>
<dbReference type="GO" id="GO:0006508">
    <property type="term" value="P:proteolysis"/>
    <property type="evidence" value="ECO:0007669"/>
    <property type="project" value="UniProtKB-KW"/>
</dbReference>
<dbReference type="CDD" id="cd02248">
    <property type="entry name" value="Peptidase_C1A"/>
    <property type="match status" value="1"/>
</dbReference>
<dbReference type="FunFam" id="3.90.70.10:FF:000057">
    <property type="entry name" value="Cysteine protease RD19A"/>
    <property type="match status" value="1"/>
</dbReference>
<dbReference type="Gene3D" id="3.90.70.10">
    <property type="entry name" value="Cysteine proteinases"/>
    <property type="match status" value="1"/>
</dbReference>
<dbReference type="InterPro" id="IPR038765">
    <property type="entry name" value="Papain-like_cys_pep_sf"/>
</dbReference>
<dbReference type="InterPro" id="IPR025661">
    <property type="entry name" value="Pept_asp_AS"/>
</dbReference>
<dbReference type="InterPro" id="IPR000169">
    <property type="entry name" value="Pept_cys_AS"/>
</dbReference>
<dbReference type="InterPro" id="IPR013128">
    <property type="entry name" value="Peptidase_C1A"/>
</dbReference>
<dbReference type="InterPro" id="IPR000668">
    <property type="entry name" value="Peptidase_C1A_C"/>
</dbReference>
<dbReference type="InterPro" id="IPR039417">
    <property type="entry name" value="Peptidase_C1A_papain-like"/>
</dbReference>
<dbReference type="InterPro" id="IPR013201">
    <property type="entry name" value="Prot_inhib_I29"/>
</dbReference>
<dbReference type="PANTHER" id="PTHR12411">
    <property type="entry name" value="CYSTEINE PROTEASE FAMILY C1-RELATED"/>
    <property type="match status" value="1"/>
</dbReference>
<dbReference type="Pfam" id="PF08246">
    <property type="entry name" value="Inhibitor_I29"/>
    <property type="match status" value="1"/>
</dbReference>
<dbReference type="Pfam" id="PF00112">
    <property type="entry name" value="Peptidase_C1"/>
    <property type="match status" value="1"/>
</dbReference>
<dbReference type="PRINTS" id="PR00705">
    <property type="entry name" value="PAPAIN"/>
</dbReference>
<dbReference type="SMART" id="SM00848">
    <property type="entry name" value="Inhibitor_I29"/>
    <property type="match status" value="1"/>
</dbReference>
<dbReference type="SMART" id="SM00645">
    <property type="entry name" value="Pept_C1"/>
    <property type="match status" value="1"/>
</dbReference>
<dbReference type="SUPFAM" id="SSF54001">
    <property type="entry name" value="Cysteine proteinases"/>
    <property type="match status" value="1"/>
</dbReference>
<dbReference type="PROSITE" id="PS00640">
    <property type="entry name" value="THIOL_PROTEASE_ASN"/>
    <property type="match status" value="1"/>
</dbReference>
<dbReference type="PROSITE" id="PS00139">
    <property type="entry name" value="THIOL_PROTEASE_CYS"/>
    <property type="match status" value="1"/>
</dbReference>
<protein>
    <recommendedName>
        <fullName evidence="13">Probable cysteine protease RD19C</fullName>
        <ecNumber evidence="3">3.4.22.-</ecNumber>
    </recommendedName>
    <alternativeName>
        <fullName evidence="12">RD19-like protein 2</fullName>
    </alternativeName>
</protein>
<feature type="signal peptide" evidence="5">
    <location>
        <begin position="1"/>
        <end position="20"/>
    </location>
</feature>
<feature type="propeptide" id="PRO_0000436325" description="Activation peptide" evidence="1">
    <location>
        <begin position="21"/>
        <end position="139"/>
    </location>
</feature>
<feature type="chain" id="PRO_5006529509" description="Probable cysteine protease RD19C">
    <location>
        <begin position="140"/>
        <end position="373"/>
    </location>
</feature>
<feature type="active site" evidence="7">
    <location>
        <position position="164"/>
    </location>
</feature>
<feature type="active site" evidence="8">
    <location>
        <position position="307"/>
    </location>
</feature>
<feature type="active site" evidence="9">
    <location>
        <position position="334"/>
    </location>
</feature>
<feature type="glycosylation site" description="N-linked (GlcNAc...) asparagine" evidence="6">
    <location>
        <position position="258"/>
    </location>
</feature>
<feature type="disulfide bond" evidence="4">
    <location>
        <begin position="161"/>
        <end position="211"/>
    </location>
</feature>
<feature type="disulfide bond" evidence="4">
    <location>
        <begin position="195"/>
        <end position="245"/>
    </location>
</feature>
<feature type="disulfide bond" evidence="4">
    <location>
        <begin position="301"/>
        <end position="356"/>
    </location>
</feature>
<gene>
    <name evidence="13" type="primary">RD19C</name>
    <name evidence="12" type="synonym">RDL2</name>
    <name evidence="14" type="ordered locus">At4g16190</name>
    <name evidence="15" type="ORF">dl4135w</name>
</gene>